<comment type="function">
    <text evidence="1">Formation of pseudouridine at positions 38, 39 and 40 in the anticodon stem and loop of transfer RNAs.</text>
</comment>
<comment type="catalytic activity">
    <reaction evidence="1">
        <text>uridine(38/39/40) in tRNA = pseudouridine(38/39/40) in tRNA</text>
        <dbReference type="Rhea" id="RHEA:22376"/>
        <dbReference type="Rhea" id="RHEA-COMP:10085"/>
        <dbReference type="Rhea" id="RHEA-COMP:10087"/>
        <dbReference type="ChEBI" id="CHEBI:65314"/>
        <dbReference type="ChEBI" id="CHEBI:65315"/>
        <dbReference type="EC" id="5.4.99.12"/>
    </reaction>
</comment>
<comment type="subunit">
    <text evidence="1">Homodimer.</text>
</comment>
<comment type="similarity">
    <text evidence="1">Belongs to the tRNA pseudouridine synthase TruA family.</text>
</comment>
<evidence type="ECO:0000255" key="1">
    <source>
        <dbReference type="HAMAP-Rule" id="MF_00171"/>
    </source>
</evidence>
<feature type="chain" id="PRO_1000017183" description="tRNA pseudouridine synthase A">
    <location>
        <begin position="1"/>
        <end position="254"/>
    </location>
</feature>
<feature type="active site" description="Nucleophile" evidence="1">
    <location>
        <position position="52"/>
    </location>
</feature>
<feature type="binding site" evidence="1">
    <location>
        <position position="111"/>
    </location>
    <ligand>
        <name>substrate</name>
    </ligand>
</feature>
<name>TRUA_RHIWR</name>
<reference key="1">
    <citation type="journal article" date="2010" name="J. Bacteriol.">
        <title>Genome sequence of the dioxin-mineralizing bacterium Sphingomonas wittichii RW1.</title>
        <authorList>
            <person name="Miller T.R."/>
            <person name="Delcher A.L."/>
            <person name="Salzberg S.L."/>
            <person name="Saunders E."/>
            <person name="Detter J.C."/>
            <person name="Halden R.U."/>
        </authorList>
    </citation>
    <scope>NUCLEOTIDE SEQUENCE [LARGE SCALE GENOMIC DNA]</scope>
    <source>
        <strain>DSM 6014 / CCUG 31198 / JCM 15750 / NBRC 105917 / EY 4224 / RW1</strain>
    </source>
</reference>
<proteinExistence type="inferred from homology"/>
<gene>
    <name evidence="1" type="primary">truA</name>
    <name type="ordered locus">Swit_4041</name>
</gene>
<sequence>MTRFRLTVEFDGRPFMGWQRQAHGPSVQQAIEEAITAVTGERAVIHAAGRTDARVHGRAMTAHADIAKPITPFRLKEALNARLRPAPVAILACEPVAGDWHARFSCVGRRYVYRIVNRRAPLTFDAGLAWQVAADLDDQAMHAAAQCLVGRHDFTTFRSAHCQAESPVKTLDRLDVRRSGELIEIEAAARSFLHHQVRSMVGCLALVGRGRWTAADLADALAAADRARLGLNAPPDGLYFMEAVYPAETGETAR</sequence>
<keyword id="KW-0413">Isomerase</keyword>
<keyword id="KW-1185">Reference proteome</keyword>
<keyword id="KW-0819">tRNA processing</keyword>
<dbReference type="EC" id="5.4.99.12" evidence="1"/>
<dbReference type="EMBL" id="CP000699">
    <property type="protein sequence ID" value="ABQ70385.1"/>
    <property type="molecule type" value="Genomic_DNA"/>
</dbReference>
<dbReference type="SMR" id="A5VDL9"/>
<dbReference type="STRING" id="392499.Swit_4041"/>
<dbReference type="PaxDb" id="392499-Swit_4041"/>
<dbReference type="KEGG" id="swi:Swit_4041"/>
<dbReference type="eggNOG" id="COG0101">
    <property type="taxonomic scope" value="Bacteria"/>
</dbReference>
<dbReference type="HOGENOM" id="CLU_014673_0_2_5"/>
<dbReference type="OrthoDB" id="9811823at2"/>
<dbReference type="Proteomes" id="UP000001989">
    <property type="component" value="Chromosome"/>
</dbReference>
<dbReference type="GO" id="GO:0003723">
    <property type="term" value="F:RNA binding"/>
    <property type="evidence" value="ECO:0007669"/>
    <property type="project" value="InterPro"/>
</dbReference>
<dbReference type="GO" id="GO:0160147">
    <property type="term" value="F:tRNA pseudouridine(38-40) synthase activity"/>
    <property type="evidence" value="ECO:0007669"/>
    <property type="project" value="UniProtKB-EC"/>
</dbReference>
<dbReference type="GO" id="GO:0031119">
    <property type="term" value="P:tRNA pseudouridine synthesis"/>
    <property type="evidence" value="ECO:0007669"/>
    <property type="project" value="UniProtKB-UniRule"/>
</dbReference>
<dbReference type="CDD" id="cd02570">
    <property type="entry name" value="PseudoU_synth_EcTruA"/>
    <property type="match status" value="1"/>
</dbReference>
<dbReference type="Gene3D" id="3.30.70.660">
    <property type="entry name" value="Pseudouridine synthase I, catalytic domain, C-terminal subdomain"/>
    <property type="match status" value="1"/>
</dbReference>
<dbReference type="Gene3D" id="3.30.70.580">
    <property type="entry name" value="Pseudouridine synthase I, catalytic domain, N-terminal subdomain"/>
    <property type="match status" value="1"/>
</dbReference>
<dbReference type="HAMAP" id="MF_00171">
    <property type="entry name" value="TruA"/>
    <property type="match status" value="1"/>
</dbReference>
<dbReference type="InterPro" id="IPR020103">
    <property type="entry name" value="PsdUridine_synth_cat_dom_sf"/>
</dbReference>
<dbReference type="InterPro" id="IPR001406">
    <property type="entry name" value="PsdUridine_synth_TruA"/>
</dbReference>
<dbReference type="InterPro" id="IPR020097">
    <property type="entry name" value="PsdUridine_synth_TruA_a/b_dom"/>
</dbReference>
<dbReference type="InterPro" id="IPR020095">
    <property type="entry name" value="PsdUridine_synth_TruA_C"/>
</dbReference>
<dbReference type="InterPro" id="IPR020094">
    <property type="entry name" value="TruA/RsuA/RluB/E/F_N"/>
</dbReference>
<dbReference type="NCBIfam" id="TIGR00071">
    <property type="entry name" value="hisT_truA"/>
    <property type="match status" value="1"/>
</dbReference>
<dbReference type="PANTHER" id="PTHR11142">
    <property type="entry name" value="PSEUDOURIDYLATE SYNTHASE"/>
    <property type="match status" value="1"/>
</dbReference>
<dbReference type="PANTHER" id="PTHR11142:SF0">
    <property type="entry name" value="TRNA PSEUDOURIDINE SYNTHASE-LIKE 1"/>
    <property type="match status" value="1"/>
</dbReference>
<dbReference type="Pfam" id="PF01416">
    <property type="entry name" value="PseudoU_synth_1"/>
    <property type="match status" value="2"/>
</dbReference>
<dbReference type="PIRSF" id="PIRSF001430">
    <property type="entry name" value="tRNA_psdUrid_synth"/>
    <property type="match status" value="1"/>
</dbReference>
<dbReference type="SUPFAM" id="SSF55120">
    <property type="entry name" value="Pseudouridine synthase"/>
    <property type="match status" value="1"/>
</dbReference>
<protein>
    <recommendedName>
        <fullName evidence="1">tRNA pseudouridine synthase A</fullName>
        <ecNumber evidence="1">5.4.99.12</ecNumber>
    </recommendedName>
    <alternativeName>
        <fullName evidence="1">tRNA pseudouridine(38-40) synthase</fullName>
    </alternativeName>
    <alternativeName>
        <fullName evidence="1">tRNA pseudouridylate synthase I</fullName>
    </alternativeName>
    <alternativeName>
        <fullName evidence="1">tRNA-uridine isomerase I</fullName>
    </alternativeName>
</protein>
<organism>
    <name type="scientific">Rhizorhabdus wittichii (strain DSM 6014 / CCUG 31198 / JCM 15750 / NBRC 105917 / EY 4224 / RW1)</name>
    <name type="common">Sphingomonas wittichii</name>
    <dbReference type="NCBI Taxonomy" id="392499"/>
    <lineage>
        <taxon>Bacteria</taxon>
        <taxon>Pseudomonadati</taxon>
        <taxon>Pseudomonadota</taxon>
        <taxon>Alphaproteobacteria</taxon>
        <taxon>Sphingomonadales</taxon>
        <taxon>Sphingomonadaceae</taxon>
        <taxon>Rhizorhabdus</taxon>
    </lineage>
</organism>
<accession>A5VDL9</accession>